<gene>
    <name evidence="1" type="primary">rpsP</name>
    <name type="ordered locus">Bphy_0769</name>
</gene>
<keyword id="KW-1185">Reference proteome</keyword>
<keyword id="KW-0687">Ribonucleoprotein</keyword>
<keyword id="KW-0689">Ribosomal protein</keyword>
<name>RS16_PARP8</name>
<comment type="similarity">
    <text evidence="1">Belongs to the bacterial ribosomal protein bS16 family.</text>
</comment>
<reference key="1">
    <citation type="journal article" date="2014" name="Stand. Genomic Sci.">
        <title>Complete genome sequence of Burkholderia phymatum STM815(T), a broad host range and efficient nitrogen-fixing symbiont of Mimosa species.</title>
        <authorList>
            <person name="Moulin L."/>
            <person name="Klonowska A."/>
            <person name="Caroline B."/>
            <person name="Booth K."/>
            <person name="Vriezen J.A."/>
            <person name="Melkonian R."/>
            <person name="James E.K."/>
            <person name="Young J.P."/>
            <person name="Bena G."/>
            <person name="Hauser L."/>
            <person name="Land M."/>
            <person name="Kyrpides N."/>
            <person name="Bruce D."/>
            <person name="Chain P."/>
            <person name="Copeland A."/>
            <person name="Pitluck S."/>
            <person name="Woyke T."/>
            <person name="Lizotte-Waniewski M."/>
            <person name="Bristow J."/>
            <person name="Riley M."/>
        </authorList>
    </citation>
    <scope>NUCLEOTIDE SEQUENCE [LARGE SCALE GENOMIC DNA]</scope>
    <source>
        <strain>DSM 17167 / CIP 108236 / LMG 21445 / STM815</strain>
    </source>
</reference>
<sequence length="84" mass="9448">MVIIRLARGGSKKRPFYNIVATDSRSRRDGRFIERVGFYNPVATKGESLRIAQDRLTYWQGVGAQLSPTVQRLVKEAQKAQPAA</sequence>
<organism>
    <name type="scientific">Paraburkholderia phymatum (strain DSM 17167 / CIP 108236 / LMG 21445 / STM815)</name>
    <name type="common">Burkholderia phymatum</name>
    <dbReference type="NCBI Taxonomy" id="391038"/>
    <lineage>
        <taxon>Bacteria</taxon>
        <taxon>Pseudomonadati</taxon>
        <taxon>Pseudomonadota</taxon>
        <taxon>Betaproteobacteria</taxon>
        <taxon>Burkholderiales</taxon>
        <taxon>Burkholderiaceae</taxon>
        <taxon>Paraburkholderia</taxon>
    </lineage>
</organism>
<evidence type="ECO:0000255" key="1">
    <source>
        <dbReference type="HAMAP-Rule" id="MF_00385"/>
    </source>
</evidence>
<evidence type="ECO:0000305" key="2"/>
<proteinExistence type="inferred from homology"/>
<feature type="chain" id="PRO_1000196356" description="Small ribosomal subunit protein bS16">
    <location>
        <begin position="1"/>
        <end position="84"/>
    </location>
</feature>
<protein>
    <recommendedName>
        <fullName evidence="1">Small ribosomal subunit protein bS16</fullName>
    </recommendedName>
    <alternativeName>
        <fullName evidence="2">30S ribosomal protein S16</fullName>
    </alternativeName>
</protein>
<accession>B2JF29</accession>
<dbReference type="EMBL" id="CP001043">
    <property type="protein sequence ID" value="ACC69958.1"/>
    <property type="molecule type" value="Genomic_DNA"/>
</dbReference>
<dbReference type="RefSeq" id="WP_012400178.1">
    <property type="nucleotide sequence ID" value="NZ_CADFGH010000007.1"/>
</dbReference>
<dbReference type="SMR" id="B2JF29"/>
<dbReference type="STRING" id="391038.Bphy_0769"/>
<dbReference type="KEGG" id="bph:Bphy_0769"/>
<dbReference type="eggNOG" id="COG0228">
    <property type="taxonomic scope" value="Bacteria"/>
</dbReference>
<dbReference type="HOGENOM" id="CLU_100590_5_1_4"/>
<dbReference type="OrthoDB" id="9807878at2"/>
<dbReference type="Proteomes" id="UP000001192">
    <property type="component" value="Chromosome 1"/>
</dbReference>
<dbReference type="GO" id="GO:0005737">
    <property type="term" value="C:cytoplasm"/>
    <property type="evidence" value="ECO:0007669"/>
    <property type="project" value="UniProtKB-ARBA"/>
</dbReference>
<dbReference type="GO" id="GO:0015935">
    <property type="term" value="C:small ribosomal subunit"/>
    <property type="evidence" value="ECO:0007669"/>
    <property type="project" value="TreeGrafter"/>
</dbReference>
<dbReference type="GO" id="GO:0003735">
    <property type="term" value="F:structural constituent of ribosome"/>
    <property type="evidence" value="ECO:0007669"/>
    <property type="project" value="InterPro"/>
</dbReference>
<dbReference type="GO" id="GO:0006412">
    <property type="term" value="P:translation"/>
    <property type="evidence" value="ECO:0007669"/>
    <property type="project" value="UniProtKB-UniRule"/>
</dbReference>
<dbReference type="Gene3D" id="3.30.1320.10">
    <property type="match status" value="1"/>
</dbReference>
<dbReference type="HAMAP" id="MF_00385">
    <property type="entry name" value="Ribosomal_bS16"/>
    <property type="match status" value="1"/>
</dbReference>
<dbReference type="InterPro" id="IPR000307">
    <property type="entry name" value="Ribosomal_bS16"/>
</dbReference>
<dbReference type="InterPro" id="IPR023803">
    <property type="entry name" value="Ribosomal_bS16_dom_sf"/>
</dbReference>
<dbReference type="NCBIfam" id="TIGR00002">
    <property type="entry name" value="S16"/>
    <property type="match status" value="1"/>
</dbReference>
<dbReference type="PANTHER" id="PTHR12919">
    <property type="entry name" value="30S RIBOSOMAL PROTEIN S16"/>
    <property type="match status" value="1"/>
</dbReference>
<dbReference type="PANTHER" id="PTHR12919:SF20">
    <property type="entry name" value="SMALL RIBOSOMAL SUBUNIT PROTEIN BS16M"/>
    <property type="match status" value="1"/>
</dbReference>
<dbReference type="Pfam" id="PF00886">
    <property type="entry name" value="Ribosomal_S16"/>
    <property type="match status" value="1"/>
</dbReference>
<dbReference type="SUPFAM" id="SSF54565">
    <property type="entry name" value="Ribosomal protein S16"/>
    <property type="match status" value="1"/>
</dbReference>